<organism>
    <name type="scientific">Streptococcus pneumoniae (strain Taiwan19F-14)</name>
    <dbReference type="NCBI Taxonomy" id="487213"/>
    <lineage>
        <taxon>Bacteria</taxon>
        <taxon>Bacillati</taxon>
        <taxon>Bacillota</taxon>
        <taxon>Bacilli</taxon>
        <taxon>Lactobacillales</taxon>
        <taxon>Streptococcaceae</taxon>
        <taxon>Streptococcus</taxon>
    </lineage>
</organism>
<sequence>MTKEFHHVTVLLHETIDMLDVKPDGIYVDATLGGAGHSEYLLSKLSEKGHLYAFDQDQNAIDNAQKRLAPYIEKGMVTFIKDNFRHLQARLREAGVQEIDGICYDLGVSSPQLDQRERGFSYKKDAPLDMRMNQDASLTAYEVVNHYDYHDLVRIFFKYGEDKFSKQIARKIEQAREVKPIETTTELAEIIKSAKPAKELKKKGHPAKQIFQAIRIEVNDELGAADESIQQAMDMLALDGRISVITFHSLEDRLTKQLFKEASTVEVPKGLPFIPDDLKPKMELVARKPILPSAEELEANNRSHSAKLRVARKIHK</sequence>
<protein>
    <recommendedName>
        <fullName evidence="1">Ribosomal RNA small subunit methyltransferase H</fullName>
        <ecNumber evidence="1">2.1.1.199</ecNumber>
    </recommendedName>
    <alternativeName>
        <fullName evidence="1">16S rRNA m(4)C1402 methyltransferase</fullName>
    </alternativeName>
    <alternativeName>
        <fullName evidence="1">rRNA (cytosine-N(4)-)-methyltransferase RsmH</fullName>
    </alternativeName>
</protein>
<feature type="chain" id="PRO_0000387155" description="Ribosomal RNA small subunit methyltransferase H">
    <location>
        <begin position="1"/>
        <end position="316"/>
    </location>
</feature>
<feature type="binding site" evidence="1">
    <location>
        <begin position="35"/>
        <end position="37"/>
    </location>
    <ligand>
        <name>S-adenosyl-L-methionine</name>
        <dbReference type="ChEBI" id="CHEBI:59789"/>
    </ligand>
</feature>
<feature type="binding site" evidence="1">
    <location>
        <position position="55"/>
    </location>
    <ligand>
        <name>S-adenosyl-L-methionine</name>
        <dbReference type="ChEBI" id="CHEBI:59789"/>
    </ligand>
</feature>
<feature type="binding site" evidence="1">
    <location>
        <position position="84"/>
    </location>
    <ligand>
        <name>S-adenosyl-L-methionine</name>
        <dbReference type="ChEBI" id="CHEBI:59789"/>
    </ligand>
</feature>
<feature type="binding site" evidence="1">
    <location>
        <position position="105"/>
    </location>
    <ligand>
        <name>S-adenosyl-L-methionine</name>
        <dbReference type="ChEBI" id="CHEBI:59789"/>
    </ligand>
</feature>
<feature type="binding site" evidence="1">
    <location>
        <position position="112"/>
    </location>
    <ligand>
        <name>S-adenosyl-L-methionine</name>
        <dbReference type="ChEBI" id="CHEBI:59789"/>
    </ligand>
</feature>
<gene>
    <name evidence="1" type="primary">rsmH</name>
    <name type="synonym">mraW</name>
    <name type="ordered locus">SPT_0384</name>
</gene>
<accession>C1CPL0</accession>
<comment type="function">
    <text evidence="1">Specifically methylates the N4 position of cytidine in position 1402 (C1402) of 16S rRNA.</text>
</comment>
<comment type="catalytic activity">
    <reaction evidence="1">
        <text>cytidine(1402) in 16S rRNA + S-adenosyl-L-methionine = N(4)-methylcytidine(1402) in 16S rRNA + S-adenosyl-L-homocysteine + H(+)</text>
        <dbReference type="Rhea" id="RHEA:42928"/>
        <dbReference type="Rhea" id="RHEA-COMP:10286"/>
        <dbReference type="Rhea" id="RHEA-COMP:10287"/>
        <dbReference type="ChEBI" id="CHEBI:15378"/>
        <dbReference type="ChEBI" id="CHEBI:57856"/>
        <dbReference type="ChEBI" id="CHEBI:59789"/>
        <dbReference type="ChEBI" id="CHEBI:74506"/>
        <dbReference type="ChEBI" id="CHEBI:82748"/>
        <dbReference type="EC" id="2.1.1.199"/>
    </reaction>
</comment>
<comment type="subcellular location">
    <subcellularLocation>
        <location evidence="1">Cytoplasm</location>
    </subcellularLocation>
</comment>
<comment type="similarity">
    <text evidence="1">Belongs to the methyltransferase superfamily. RsmH family.</text>
</comment>
<reference key="1">
    <citation type="journal article" date="2010" name="Genome Biol.">
        <title>Structure and dynamics of the pan-genome of Streptococcus pneumoniae and closely related species.</title>
        <authorList>
            <person name="Donati C."/>
            <person name="Hiller N.L."/>
            <person name="Tettelin H."/>
            <person name="Muzzi A."/>
            <person name="Croucher N.J."/>
            <person name="Angiuoli S.V."/>
            <person name="Oggioni M."/>
            <person name="Dunning Hotopp J.C."/>
            <person name="Hu F.Z."/>
            <person name="Riley D.R."/>
            <person name="Covacci A."/>
            <person name="Mitchell T.J."/>
            <person name="Bentley S.D."/>
            <person name="Kilian M."/>
            <person name="Ehrlich G.D."/>
            <person name="Rappuoli R."/>
            <person name="Moxon E.R."/>
            <person name="Masignani V."/>
        </authorList>
    </citation>
    <scope>NUCLEOTIDE SEQUENCE [LARGE SCALE GENOMIC DNA]</scope>
    <source>
        <strain>Taiwan19F-14</strain>
    </source>
</reference>
<dbReference type="EC" id="2.1.1.199" evidence="1"/>
<dbReference type="EMBL" id="CP000921">
    <property type="protein sequence ID" value="ACO23088.1"/>
    <property type="molecule type" value="Genomic_DNA"/>
</dbReference>
<dbReference type="RefSeq" id="WP_000159399.1">
    <property type="nucleotide sequence ID" value="NC_012469.1"/>
</dbReference>
<dbReference type="SMR" id="C1CPL0"/>
<dbReference type="KEGG" id="snt:SPT_0384"/>
<dbReference type="HOGENOM" id="CLU_038422_2_0_9"/>
<dbReference type="GO" id="GO:0005737">
    <property type="term" value="C:cytoplasm"/>
    <property type="evidence" value="ECO:0007669"/>
    <property type="project" value="UniProtKB-SubCell"/>
</dbReference>
<dbReference type="GO" id="GO:0071424">
    <property type="term" value="F:rRNA (cytosine-N4-)-methyltransferase activity"/>
    <property type="evidence" value="ECO:0007669"/>
    <property type="project" value="UniProtKB-UniRule"/>
</dbReference>
<dbReference type="GO" id="GO:0070475">
    <property type="term" value="P:rRNA base methylation"/>
    <property type="evidence" value="ECO:0007669"/>
    <property type="project" value="UniProtKB-UniRule"/>
</dbReference>
<dbReference type="FunFam" id="1.10.150.170:FF:000001">
    <property type="entry name" value="Ribosomal RNA small subunit methyltransferase H"/>
    <property type="match status" value="1"/>
</dbReference>
<dbReference type="Gene3D" id="1.10.150.170">
    <property type="entry name" value="Putative methyltransferase TM0872, insert domain"/>
    <property type="match status" value="1"/>
</dbReference>
<dbReference type="Gene3D" id="3.40.50.150">
    <property type="entry name" value="Vaccinia Virus protein VP39"/>
    <property type="match status" value="1"/>
</dbReference>
<dbReference type="HAMAP" id="MF_01007">
    <property type="entry name" value="16SrRNA_methyltr_H"/>
    <property type="match status" value="1"/>
</dbReference>
<dbReference type="InterPro" id="IPR002903">
    <property type="entry name" value="RsmH"/>
</dbReference>
<dbReference type="InterPro" id="IPR023397">
    <property type="entry name" value="SAM-dep_MeTrfase_MraW_recog"/>
</dbReference>
<dbReference type="InterPro" id="IPR029063">
    <property type="entry name" value="SAM-dependent_MTases_sf"/>
</dbReference>
<dbReference type="NCBIfam" id="TIGR00006">
    <property type="entry name" value="16S rRNA (cytosine(1402)-N(4))-methyltransferase RsmH"/>
    <property type="match status" value="1"/>
</dbReference>
<dbReference type="PANTHER" id="PTHR11265:SF0">
    <property type="entry name" value="12S RRNA N4-METHYLCYTIDINE METHYLTRANSFERASE"/>
    <property type="match status" value="1"/>
</dbReference>
<dbReference type="PANTHER" id="PTHR11265">
    <property type="entry name" value="S-ADENOSYL-METHYLTRANSFERASE MRAW"/>
    <property type="match status" value="1"/>
</dbReference>
<dbReference type="Pfam" id="PF01795">
    <property type="entry name" value="Methyltransf_5"/>
    <property type="match status" value="1"/>
</dbReference>
<dbReference type="PIRSF" id="PIRSF004486">
    <property type="entry name" value="MraW"/>
    <property type="match status" value="1"/>
</dbReference>
<dbReference type="SUPFAM" id="SSF81799">
    <property type="entry name" value="Putative methyltransferase TM0872, insert domain"/>
    <property type="match status" value="1"/>
</dbReference>
<dbReference type="SUPFAM" id="SSF53335">
    <property type="entry name" value="S-adenosyl-L-methionine-dependent methyltransferases"/>
    <property type="match status" value="1"/>
</dbReference>
<keyword id="KW-0963">Cytoplasm</keyword>
<keyword id="KW-0489">Methyltransferase</keyword>
<keyword id="KW-0698">rRNA processing</keyword>
<keyword id="KW-0949">S-adenosyl-L-methionine</keyword>
<keyword id="KW-0808">Transferase</keyword>
<name>RSMH_STRZT</name>
<evidence type="ECO:0000255" key="1">
    <source>
        <dbReference type="HAMAP-Rule" id="MF_01007"/>
    </source>
</evidence>
<proteinExistence type="inferred from homology"/>